<gene>
    <name type="primary">cct-6</name>
    <name type="ORF">F01F1.8</name>
</gene>
<accession>P46550</accession>
<proteinExistence type="evidence at protein level"/>
<reference key="1">
    <citation type="journal article" date="1998" name="Science">
        <title>Genome sequence of the nematode C. elegans: a platform for investigating biology.</title>
        <authorList>
            <consortium name="The C. elegans sequencing consortium"/>
        </authorList>
    </citation>
    <scope>NUCLEOTIDE SEQUENCE [LARGE SCALE GENOMIC DNA]</scope>
    <source>
        <strain>Bristol N2</strain>
    </source>
</reference>
<reference key="2">
    <citation type="journal article" date="1995" name="DNA Cell Biol.">
        <title>Characterization of four new tcp-1-related cct genes from the nematode Caenorhabditis elegans.</title>
        <authorList>
            <person name="Leroux M.R."/>
            <person name="Candido E.P.M."/>
        </authorList>
    </citation>
    <scope>CHARACTERIZATION</scope>
</reference>
<organism>
    <name type="scientific">Caenorhabditis elegans</name>
    <dbReference type="NCBI Taxonomy" id="6239"/>
    <lineage>
        <taxon>Eukaryota</taxon>
        <taxon>Metazoa</taxon>
        <taxon>Ecdysozoa</taxon>
        <taxon>Nematoda</taxon>
        <taxon>Chromadorea</taxon>
        <taxon>Rhabditida</taxon>
        <taxon>Rhabditina</taxon>
        <taxon>Rhabditomorpha</taxon>
        <taxon>Rhabditoidea</taxon>
        <taxon>Rhabditidae</taxon>
        <taxon>Peloderinae</taxon>
        <taxon>Caenorhabditis</taxon>
    </lineage>
</organism>
<dbReference type="EMBL" id="FO080705">
    <property type="protein sequence ID" value="CCD65990.1"/>
    <property type="molecule type" value="Genomic_DNA"/>
</dbReference>
<dbReference type="PIR" id="T15943">
    <property type="entry name" value="T15943"/>
</dbReference>
<dbReference type="RefSeq" id="NP_741153.1">
    <property type="nucleotide sequence ID" value="NM_171135.10"/>
</dbReference>
<dbReference type="SMR" id="P46550"/>
<dbReference type="BioGRID" id="41041">
    <property type="interactions" value="17"/>
</dbReference>
<dbReference type="FunCoup" id="P46550">
    <property type="interactions" value="2611"/>
</dbReference>
<dbReference type="IntAct" id="P46550">
    <property type="interactions" value="1"/>
</dbReference>
<dbReference type="STRING" id="6239.F01F1.8a.1"/>
<dbReference type="PaxDb" id="6239-F01F1.8a.1"/>
<dbReference type="PeptideAtlas" id="P46550"/>
<dbReference type="EnsemblMetazoa" id="F01F1.8a.1">
    <property type="protein sequence ID" value="F01F1.8a.1"/>
    <property type="gene ID" value="WBGene00000381"/>
</dbReference>
<dbReference type="EnsemblMetazoa" id="F01F1.8a.2">
    <property type="protein sequence ID" value="F01F1.8a.2"/>
    <property type="gene ID" value="WBGene00000381"/>
</dbReference>
<dbReference type="GeneID" id="175819"/>
<dbReference type="KEGG" id="cel:CELE_F01F1.8"/>
<dbReference type="UCSC" id="F01F1.8a.1">
    <property type="organism name" value="c. elegans"/>
</dbReference>
<dbReference type="AGR" id="WB:WBGene00000381"/>
<dbReference type="CTD" id="175819"/>
<dbReference type="WormBase" id="F01F1.8a">
    <property type="protein sequence ID" value="CE01234"/>
    <property type="gene ID" value="WBGene00000381"/>
    <property type="gene designation" value="cct-6"/>
</dbReference>
<dbReference type="eggNOG" id="KOG0359">
    <property type="taxonomic scope" value="Eukaryota"/>
</dbReference>
<dbReference type="GeneTree" id="ENSGT00940000156339"/>
<dbReference type="InParanoid" id="P46550"/>
<dbReference type="OMA" id="LHPRIMT"/>
<dbReference type="OrthoDB" id="10052040at2759"/>
<dbReference type="PhylomeDB" id="P46550"/>
<dbReference type="BRENDA" id="3.6.4.B10">
    <property type="organism ID" value="1045"/>
</dbReference>
<dbReference type="Reactome" id="R-CEL-390471">
    <property type="pathway name" value="Association of TriC/CCT with target proteins during biosynthesis"/>
</dbReference>
<dbReference type="Reactome" id="R-CEL-6814122">
    <property type="pathway name" value="Cooperation of PDCL (PhLP1) and TRiC/CCT in G-protein beta folding"/>
</dbReference>
<dbReference type="PRO" id="PR:P46550"/>
<dbReference type="Proteomes" id="UP000001940">
    <property type="component" value="Chromosome III"/>
</dbReference>
<dbReference type="Bgee" id="WBGene00000381">
    <property type="expression patterns" value="Expressed in germ line (C elegans) and 4 other cell types or tissues"/>
</dbReference>
<dbReference type="ExpressionAtlas" id="P46550">
    <property type="expression patterns" value="baseline and differential"/>
</dbReference>
<dbReference type="GO" id="GO:0005832">
    <property type="term" value="C:chaperonin-containing T-complex"/>
    <property type="evidence" value="ECO:0000318"/>
    <property type="project" value="GO_Central"/>
</dbReference>
<dbReference type="GO" id="GO:0005524">
    <property type="term" value="F:ATP binding"/>
    <property type="evidence" value="ECO:0007669"/>
    <property type="project" value="UniProtKB-KW"/>
</dbReference>
<dbReference type="GO" id="GO:0016887">
    <property type="term" value="F:ATP hydrolysis activity"/>
    <property type="evidence" value="ECO:0007669"/>
    <property type="project" value="InterPro"/>
</dbReference>
<dbReference type="GO" id="GO:0140662">
    <property type="term" value="F:ATP-dependent protein folding chaperone"/>
    <property type="evidence" value="ECO:0007669"/>
    <property type="project" value="InterPro"/>
</dbReference>
<dbReference type="GO" id="GO:0051082">
    <property type="term" value="F:unfolded protein binding"/>
    <property type="evidence" value="ECO:0000318"/>
    <property type="project" value="GO_Central"/>
</dbReference>
<dbReference type="GO" id="GO:0006457">
    <property type="term" value="P:protein folding"/>
    <property type="evidence" value="ECO:0000318"/>
    <property type="project" value="GO_Central"/>
</dbReference>
<dbReference type="CDD" id="cd03342">
    <property type="entry name" value="TCP1_zeta"/>
    <property type="match status" value="1"/>
</dbReference>
<dbReference type="FunFam" id="1.10.560.10:FF:000058">
    <property type="entry name" value="T-complex protein 1 subunit zeta"/>
    <property type="match status" value="1"/>
</dbReference>
<dbReference type="FunFam" id="3.30.260.10:FF:000017">
    <property type="entry name" value="T-complex protein 1 subunit zeta"/>
    <property type="match status" value="1"/>
</dbReference>
<dbReference type="FunFam" id="3.50.7.10:FF:000004">
    <property type="entry name" value="T-complex protein 1 subunit zeta"/>
    <property type="match status" value="1"/>
</dbReference>
<dbReference type="Gene3D" id="3.50.7.10">
    <property type="entry name" value="GroEL"/>
    <property type="match status" value="1"/>
</dbReference>
<dbReference type="Gene3D" id="1.10.560.10">
    <property type="entry name" value="GroEL-like equatorial domain"/>
    <property type="match status" value="1"/>
</dbReference>
<dbReference type="Gene3D" id="3.30.260.10">
    <property type="entry name" value="TCP-1-like chaperonin intermediate domain"/>
    <property type="match status" value="1"/>
</dbReference>
<dbReference type="InterPro" id="IPR012722">
    <property type="entry name" value="Chap_CCT_zeta"/>
</dbReference>
<dbReference type="InterPro" id="IPR017998">
    <property type="entry name" value="Chaperone_TCP-1"/>
</dbReference>
<dbReference type="InterPro" id="IPR002194">
    <property type="entry name" value="Chaperonin_TCP-1_CS"/>
</dbReference>
<dbReference type="InterPro" id="IPR002423">
    <property type="entry name" value="Cpn60/GroEL/TCP-1"/>
</dbReference>
<dbReference type="InterPro" id="IPR027409">
    <property type="entry name" value="GroEL-like_apical_dom_sf"/>
</dbReference>
<dbReference type="InterPro" id="IPR027413">
    <property type="entry name" value="GROEL-like_equatorial_sf"/>
</dbReference>
<dbReference type="InterPro" id="IPR027410">
    <property type="entry name" value="TCP-1-like_intermed_sf"/>
</dbReference>
<dbReference type="NCBIfam" id="TIGR02347">
    <property type="entry name" value="chap_CCT_zeta"/>
    <property type="match status" value="1"/>
</dbReference>
<dbReference type="PANTHER" id="PTHR11353">
    <property type="entry name" value="CHAPERONIN"/>
    <property type="match status" value="1"/>
</dbReference>
<dbReference type="Pfam" id="PF00118">
    <property type="entry name" value="Cpn60_TCP1"/>
    <property type="match status" value="1"/>
</dbReference>
<dbReference type="PRINTS" id="PR00304">
    <property type="entry name" value="TCOMPLEXTCP1"/>
</dbReference>
<dbReference type="SUPFAM" id="SSF52029">
    <property type="entry name" value="GroEL apical domain-like"/>
    <property type="match status" value="1"/>
</dbReference>
<dbReference type="SUPFAM" id="SSF48592">
    <property type="entry name" value="GroEL equatorial domain-like"/>
    <property type="match status" value="1"/>
</dbReference>
<dbReference type="SUPFAM" id="SSF54849">
    <property type="entry name" value="GroEL-intermediate domain like"/>
    <property type="match status" value="1"/>
</dbReference>
<dbReference type="PROSITE" id="PS00750">
    <property type="entry name" value="TCP1_1"/>
    <property type="match status" value="1"/>
</dbReference>
<dbReference type="PROSITE" id="PS00751">
    <property type="entry name" value="TCP1_2"/>
    <property type="match status" value="1"/>
</dbReference>
<dbReference type="PROSITE" id="PS00995">
    <property type="entry name" value="TCP1_3"/>
    <property type="match status" value="1"/>
</dbReference>
<name>TCPZ_CAEEL</name>
<comment type="function">
    <text evidence="1">Molecular chaperone; assists the folding of proteins upon ATP hydrolysis. Known to play a role, in vitro, in the folding of actin and tubulin (By similarity).</text>
</comment>
<comment type="subunit">
    <text evidence="1">Heterooligomeric complex of about 850 to 900 kDa that forms two stacked rings, 12 to 16 nm in diameter.</text>
</comment>
<comment type="subcellular location">
    <subcellularLocation>
        <location evidence="1">Cytoplasm</location>
    </subcellularLocation>
</comment>
<comment type="similarity">
    <text evidence="2">Belongs to the TCP-1 chaperonin family.</text>
</comment>
<keyword id="KW-0067">ATP-binding</keyword>
<keyword id="KW-0143">Chaperone</keyword>
<keyword id="KW-0963">Cytoplasm</keyword>
<keyword id="KW-0547">Nucleotide-binding</keyword>
<keyword id="KW-1185">Reference proteome</keyword>
<feature type="chain" id="PRO_0000128360" description="T-complex protein 1 subunit zeta">
    <location>
        <begin position="1"/>
        <end position="539"/>
    </location>
</feature>
<protein>
    <recommendedName>
        <fullName>T-complex protein 1 subunit zeta</fullName>
        <shortName>TCP-1-zeta</shortName>
    </recommendedName>
    <alternativeName>
        <fullName>CCT-zeta</fullName>
    </alternativeName>
</protein>
<sequence length="539" mass="58905">MSSIQCLNPKAELARHAAALELNISGARGLQDVMRSNLGPKGTLKMLVSGAGDIKLTKDGNVLLHEMAIQHPTASMIAKASTAQDDVTGDGTTSTVLLIGELLKQAESLVLEGLHPRIVTEGFEWANTKTLELLEKFKKEAPVERDLLVEVCRTALRTKLHQKLADHITECVVDAVLAIRRDGEEPDLHMVEKMEMHHDSDMDTTLVRGLVLDHGARHPDMPRHVKDAYILTCNVSLEYEKTEVNSGLFYKTAKEREALLAAEREFITRRVHKIIELKKKVIDNSPDGKNKGFVVINQKGIDPPSLDLLASEGILALRRAKRRNMERLQLAVGGEAVNSVDDLTPEDLGWAGLVYEHSLGEEKYTFIEECRAPKSVTLLIKGPNKHTITQIKDAIHDGLRAVFNTIVDKAVLPGAAAFEIAAYVMLKKDVENLKGRAKLGAEAFAQALLVIPKTLAVNGGYDAQETLVKLIEEKTAAGPDIAVGLDLETGGAVEPQGIWDNVTVKKNSISSATVLACNLLLVDEVMRAGMTNLKQPQPE</sequence>
<evidence type="ECO:0000250" key="1"/>
<evidence type="ECO:0000305" key="2"/>